<comment type="similarity">
    <text evidence="1">Belongs to the UPF0246 family.</text>
</comment>
<proteinExistence type="inferred from homology"/>
<protein>
    <recommendedName>
        <fullName evidence="1">UPF0246 protein ABO_1338</fullName>
    </recommendedName>
</protein>
<gene>
    <name type="ordered locus">ABO_1338</name>
</gene>
<dbReference type="EMBL" id="AM286690">
    <property type="protein sequence ID" value="CAL16786.1"/>
    <property type="molecule type" value="Genomic_DNA"/>
</dbReference>
<dbReference type="SMR" id="Q0VPW2"/>
<dbReference type="STRING" id="393595.ABO_1338"/>
<dbReference type="KEGG" id="abo:ABO_1338"/>
<dbReference type="eggNOG" id="COG3022">
    <property type="taxonomic scope" value="Bacteria"/>
</dbReference>
<dbReference type="HOGENOM" id="CLU_061989_0_0_6"/>
<dbReference type="OrthoDB" id="9777133at2"/>
<dbReference type="Proteomes" id="UP000008871">
    <property type="component" value="Chromosome"/>
</dbReference>
<dbReference type="GO" id="GO:0005829">
    <property type="term" value="C:cytosol"/>
    <property type="evidence" value="ECO:0007669"/>
    <property type="project" value="TreeGrafter"/>
</dbReference>
<dbReference type="GO" id="GO:0033194">
    <property type="term" value="P:response to hydroperoxide"/>
    <property type="evidence" value="ECO:0007669"/>
    <property type="project" value="TreeGrafter"/>
</dbReference>
<dbReference type="HAMAP" id="MF_00652">
    <property type="entry name" value="UPF0246"/>
    <property type="match status" value="1"/>
</dbReference>
<dbReference type="InterPro" id="IPR005583">
    <property type="entry name" value="YaaA"/>
</dbReference>
<dbReference type="NCBIfam" id="NF002541">
    <property type="entry name" value="PRK02101.1-1"/>
    <property type="match status" value="1"/>
</dbReference>
<dbReference type="NCBIfam" id="NF002542">
    <property type="entry name" value="PRK02101.1-3"/>
    <property type="match status" value="1"/>
</dbReference>
<dbReference type="PANTHER" id="PTHR30283:SF4">
    <property type="entry name" value="PEROXIDE STRESS RESISTANCE PROTEIN YAAA"/>
    <property type="match status" value="1"/>
</dbReference>
<dbReference type="PANTHER" id="PTHR30283">
    <property type="entry name" value="PEROXIDE STRESS RESPONSE PROTEIN YAAA"/>
    <property type="match status" value="1"/>
</dbReference>
<dbReference type="Pfam" id="PF03883">
    <property type="entry name" value="H2O2_YaaD"/>
    <property type="match status" value="1"/>
</dbReference>
<evidence type="ECO:0000255" key="1">
    <source>
        <dbReference type="HAMAP-Rule" id="MF_00652"/>
    </source>
</evidence>
<name>Y1338_ALCBS</name>
<reference key="1">
    <citation type="journal article" date="2006" name="Nat. Biotechnol.">
        <title>Genome sequence of the ubiquitous hydrocarbon-degrading marine bacterium Alcanivorax borkumensis.</title>
        <authorList>
            <person name="Schneiker S."/>
            <person name="Martins dos Santos V.A.P."/>
            <person name="Bartels D."/>
            <person name="Bekel T."/>
            <person name="Brecht M."/>
            <person name="Buhrmester J."/>
            <person name="Chernikova T.N."/>
            <person name="Denaro R."/>
            <person name="Ferrer M."/>
            <person name="Gertler C."/>
            <person name="Goesmann A."/>
            <person name="Golyshina O.V."/>
            <person name="Kaminski F."/>
            <person name="Khachane A.N."/>
            <person name="Lang S."/>
            <person name="Linke B."/>
            <person name="McHardy A.C."/>
            <person name="Meyer F."/>
            <person name="Nechitaylo T."/>
            <person name="Puehler A."/>
            <person name="Regenhardt D."/>
            <person name="Rupp O."/>
            <person name="Sabirova J.S."/>
            <person name="Selbitschka W."/>
            <person name="Yakimov M.M."/>
            <person name="Timmis K.N."/>
            <person name="Vorhoelter F.-J."/>
            <person name="Weidner S."/>
            <person name="Kaiser O."/>
            <person name="Golyshin P.N."/>
        </authorList>
    </citation>
    <scope>NUCLEOTIDE SEQUENCE [LARGE SCALE GENOMIC DNA]</scope>
    <source>
        <strain>ATCC 700651 / DSM 11573 / NCIMB 13689 / SK2</strain>
    </source>
</reference>
<keyword id="KW-1185">Reference proteome</keyword>
<feature type="chain" id="PRO_0000261995" description="UPF0246 protein ABO_1338">
    <location>
        <begin position="1"/>
        <end position="258"/>
    </location>
</feature>
<accession>Q0VPW2</accession>
<sequence>MLIVVSPAKTLDYESELPALKTTQPRLLDDSEALIARARQLSPADISSLMGVSDKIAHLNAERFSLWERPFNKKNARPAAFAFKGDVYTGLDIESFNDHQLSEAQQRFRMLSGLYGVLRPLDLMQAYRLEMGTKLDNERGKDLYAFWGNTITELLNKDMKDAKTDVLVNLASNEYFKAVKKKAVAGTIIEPVFQDEKNGNYKIISFYAKKARGLMAAWIIKKGLKDPAKLTQFDVAGYCYCEAQSTALRPVFRRPEQG</sequence>
<organism>
    <name type="scientific">Alcanivorax borkumensis (strain ATCC 700651 / DSM 11573 / NCIMB 13689 / SK2)</name>
    <dbReference type="NCBI Taxonomy" id="393595"/>
    <lineage>
        <taxon>Bacteria</taxon>
        <taxon>Pseudomonadati</taxon>
        <taxon>Pseudomonadota</taxon>
        <taxon>Gammaproteobacteria</taxon>
        <taxon>Oceanospirillales</taxon>
        <taxon>Alcanivoracaceae</taxon>
        <taxon>Alcanivorax</taxon>
    </lineage>
</organism>